<accession>A4VSH6</accession>
<proteinExistence type="inferred from homology"/>
<evidence type="ECO:0000255" key="1">
    <source>
        <dbReference type="HAMAP-Rule" id="MF_01315"/>
    </source>
</evidence>
<evidence type="ECO:0000256" key="2">
    <source>
        <dbReference type="SAM" id="MobiDB-lite"/>
    </source>
</evidence>
<evidence type="ECO:0000305" key="3"/>
<comment type="function">
    <text evidence="1">Located at the top of the head of the 30S subunit, it contacts several helices of the 16S rRNA. In the 70S ribosome it contacts the 23S rRNA (bridge B1a) and protein L5 of the 50S subunit (bridge B1b), connecting the 2 subunits; these bridges are implicated in subunit movement. Contacts the tRNAs in the A and P-sites.</text>
</comment>
<comment type="subunit">
    <text evidence="1">Part of the 30S ribosomal subunit. Forms a loose heterodimer with protein S19. Forms two bridges to the 50S subunit in the 70S ribosome.</text>
</comment>
<comment type="similarity">
    <text evidence="1">Belongs to the universal ribosomal protein uS13 family.</text>
</comment>
<feature type="chain" id="PRO_0000306724" description="Small ribosomal subunit protein uS13">
    <location>
        <begin position="1"/>
        <end position="121"/>
    </location>
</feature>
<feature type="region of interest" description="Disordered" evidence="2">
    <location>
        <begin position="96"/>
        <end position="121"/>
    </location>
</feature>
<feature type="compositionally biased region" description="Basic residues" evidence="2">
    <location>
        <begin position="106"/>
        <end position="121"/>
    </location>
</feature>
<name>RS13_STRSY</name>
<protein>
    <recommendedName>
        <fullName evidence="1">Small ribosomal subunit protein uS13</fullName>
    </recommendedName>
    <alternativeName>
        <fullName evidence="3">30S ribosomal protein S13</fullName>
    </alternativeName>
</protein>
<gene>
    <name evidence="1" type="primary">rpsM</name>
    <name type="ordered locus">SSU05_0093</name>
</gene>
<keyword id="KW-0687">Ribonucleoprotein</keyword>
<keyword id="KW-0689">Ribosomal protein</keyword>
<keyword id="KW-0694">RNA-binding</keyword>
<keyword id="KW-0699">rRNA-binding</keyword>
<keyword id="KW-0820">tRNA-binding</keyword>
<dbReference type="EMBL" id="CP000407">
    <property type="protein sequence ID" value="ABP89065.1"/>
    <property type="molecule type" value="Genomic_DNA"/>
</dbReference>
<dbReference type="SMR" id="A4VSH6"/>
<dbReference type="STRING" id="391295.SSU05_0093"/>
<dbReference type="KEGG" id="ssu:SSU05_0093"/>
<dbReference type="eggNOG" id="COG0099">
    <property type="taxonomic scope" value="Bacteria"/>
</dbReference>
<dbReference type="HOGENOM" id="CLU_103849_1_1_9"/>
<dbReference type="GO" id="GO:0005829">
    <property type="term" value="C:cytosol"/>
    <property type="evidence" value="ECO:0007669"/>
    <property type="project" value="TreeGrafter"/>
</dbReference>
<dbReference type="GO" id="GO:0015935">
    <property type="term" value="C:small ribosomal subunit"/>
    <property type="evidence" value="ECO:0007669"/>
    <property type="project" value="TreeGrafter"/>
</dbReference>
<dbReference type="GO" id="GO:0019843">
    <property type="term" value="F:rRNA binding"/>
    <property type="evidence" value="ECO:0007669"/>
    <property type="project" value="UniProtKB-UniRule"/>
</dbReference>
<dbReference type="GO" id="GO:0003735">
    <property type="term" value="F:structural constituent of ribosome"/>
    <property type="evidence" value="ECO:0007669"/>
    <property type="project" value="InterPro"/>
</dbReference>
<dbReference type="GO" id="GO:0000049">
    <property type="term" value="F:tRNA binding"/>
    <property type="evidence" value="ECO:0007669"/>
    <property type="project" value="UniProtKB-UniRule"/>
</dbReference>
<dbReference type="GO" id="GO:0006412">
    <property type="term" value="P:translation"/>
    <property type="evidence" value="ECO:0007669"/>
    <property type="project" value="UniProtKB-UniRule"/>
</dbReference>
<dbReference type="FunFam" id="1.10.8.50:FF:000001">
    <property type="entry name" value="30S ribosomal protein S13"/>
    <property type="match status" value="1"/>
</dbReference>
<dbReference type="FunFam" id="4.10.910.10:FF:000001">
    <property type="entry name" value="30S ribosomal protein S13"/>
    <property type="match status" value="1"/>
</dbReference>
<dbReference type="Gene3D" id="1.10.8.50">
    <property type="match status" value="1"/>
</dbReference>
<dbReference type="Gene3D" id="4.10.910.10">
    <property type="entry name" value="30s ribosomal protein s13, domain 2"/>
    <property type="match status" value="1"/>
</dbReference>
<dbReference type="HAMAP" id="MF_01315">
    <property type="entry name" value="Ribosomal_uS13"/>
    <property type="match status" value="1"/>
</dbReference>
<dbReference type="InterPro" id="IPR027437">
    <property type="entry name" value="Rbsml_uS13_C"/>
</dbReference>
<dbReference type="InterPro" id="IPR001892">
    <property type="entry name" value="Ribosomal_uS13"/>
</dbReference>
<dbReference type="InterPro" id="IPR010979">
    <property type="entry name" value="Ribosomal_uS13-like_H2TH"/>
</dbReference>
<dbReference type="InterPro" id="IPR019980">
    <property type="entry name" value="Ribosomal_uS13_bac-type"/>
</dbReference>
<dbReference type="InterPro" id="IPR018269">
    <property type="entry name" value="Ribosomal_uS13_CS"/>
</dbReference>
<dbReference type="NCBIfam" id="TIGR03631">
    <property type="entry name" value="uS13_bact"/>
    <property type="match status" value="1"/>
</dbReference>
<dbReference type="PANTHER" id="PTHR10871">
    <property type="entry name" value="30S RIBOSOMAL PROTEIN S13/40S RIBOSOMAL PROTEIN S18"/>
    <property type="match status" value="1"/>
</dbReference>
<dbReference type="PANTHER" id="PTHR10871:SF1">
    <property type="entry name" value="SMALL RIBOSOMAL SUBUNIT PROTEIN US13M"/>
    <property type="match status" value="1"/>
</dbReference>
<dbReference type="Pfam" id="PF00416">
    <property type="entry name" value="Ribosomal_S13"/>
    <property type="match status" value="1"/>
</dbReference>
<dbReference type="PIRSF" id="PIRSF002134">
    <property type="entry name" value="Ribosomal_S13"/>
    <property type="match status" value="1"/>
</dbReference>
<dbReference type="SUPFAM" id="SSF46946">
    <property type="entry name" value="S13-like H2TH domain"/>
    <property type="match status" value="1"/>
</dbReference>
<dbReference type="PROSITE" id="PS00646">
    <property type="entry name" value="RIBOSOMAL_S13_1"/>
    <property type="match status" value="1"/>
</dbReference>
<dbReference type="PROSITE" id="PS50159">
    <property type="entry name" value="RIBOSOMAL_S13_2"/>
    <property type="match status" value="1"/>
</dbReference>
<organism>
    <name type="scientific">Streptococcus suis (strain 05ZYH33)</name>
    <dbReference type="NCBI Taxonomy" id="391295"/>
    <lineage>
        <taxon>Bacteria</taxon>
        <taxon>Bacillati</taxon>
        <taxon>Bacillota</taxon>
        <taxon>Bacilli</taxon>
        <taxon>Lactobacillales</taxon>
        <taxon>Streptococcaceae</taxon>
        <taxon>Streptococcus</taxon>
    </lineage>
</organism>
<sequence>MARIAGVDIPNDKRVVISLTYVYGIGLATSKKILAAAGISEDVRVKDLTSDQEDAIRREVDAIKVEGDLRREVNLNIKRLMEIGSYRGIRHRRGLPVRGQNTKNNARTRKGKAVAIAGKKK</sequence>
<reference key="1">
    <citation type="journal article" date="2007" name="PLoS ONE">
        <title>A glimpse of streptococcal toxic shock syndrome from comparative genomics of S. suis 2 Chinese isolates.</title>
        <authorList>
            <person name="Chen C."/>
            <person name="Tang J."/>
            <person name="Dong W."/>
            <person name="Wang C."/>
            <person name="Feng Y."/>
            <person name="Wang J."/>
            <person name="Zheng F."/>
            <person name="Pan X."/>
            <person name="Liu D."/>
            <person name="Li M."/>
            <person name="Song Y."/>
            <person name="Zhu X."/>
            <person name="Sun H."/>
            <person name="Feng T."/>
            <person name="Guo Z."/>
            <person name="Ju A."/>
            <person name="Ge J."/>
            <person name="Dong Y."/>
            <person name="Sun W."/>
            <person name="Jiang Y."/>
            <person name="Wang J."/>
            <person name="Yan J."/>
            <person name="Yang H."/>
            <person name="Wang X."/>
            <person name="Gao G.F."/>
            <person name="Yang R."/>
            <person name="Wang J."/>
            <person name="Yu J."/>
        </authorList>
    </citation>
    <scope>NUCLEOTIDE SEQUENCE [LARGE SCALE GENOMIC DNA]</scope>
    <source>
        <strain>05ZYH33</strain>
    </source>
</reference>